<reference key="1">
    <citation type="journal article" date="1993" name="EMBO J.">
        <title>Variable opacity (Opa) outer membrane proteins account for the cell tropisms displayed by Neisseria gonorrhoeae for human leukocytes and epithelial cells.</title>
        <authorList>
            <person name="Kupsch E.-M."/>
            <person name="Knepper B."/>
            <person name="Kuroki T."/>
            <person name="Heuer I."/>
            <person name="Meyer T.F."/>
        </authorList>
    </citation>
    <scope>NUCLEOTIDE SEQUENCE [GENOMIC DNA]</scope>
    <source>
        <strain>VP1</strain>
    </source>
</reference>
<feature type="signal peptide" evidence="1">
    <location>
        <begin position="1" status="less than"/>
        <end position="1"/>
    </location>
</feature>
<feature type="chain" id="PRO_0000021901" description="Opacity protein opA65">
    <location>
        <begin position="2"/>
        <end position="234" status="greater than"/>
    </location>
</feature>
<feature type="region of interest" description="Disordered" evidence="2">
    <location>
        <begin position="154"/>
        <end position="179"/>
    </location>
</feature>
<feature type="non-terminal residue">
    <location>
        <position position="1"/>
    </location>
</feature>
<feature type="non-terminal residue">
    <location>
        <position position="234"/>
    </location>
</feature>
<evidence type="ECO:0000255" key="1"/>
<evidence type="ECO:0000256" key="2">
    <source>
        <dbReference type="SAM" id="MobiDB-lite"/>
    </source>
</evidence>
<evidence type="ECO:0000305" key="3"/>
<name>OPA65_NEIGO</name>
<accession>Q04885</accession>
<keyword id="KW-0998">Cell outer membrane</keyword>
<keyword id="KW-0472">Membrane</keyword>
<keyword id="KW-0732">Signal</keyword>
<keyword id="KW-0812">Transmembrane</keyword>
<keyword id="KW-1134">Transmembrane beta strand</keyword>
<dbReference type="EMBL" id="Z18940">
    <property type="protein sequence ID" value="CAA79373.1"/>
    <property type="molecule type" value="Genomic_DNA"/>
</dbReference>
<dbReference type="PIR" id="S36348">
    <property type="entry name" value="S36348"/>
</dbReference>
<dbReference type="SMR" id="Q04885"/>
<dbReference type="Reactome" id="R-HSA-202733">
    <property type="pathway name" value="Cell surface interactions at the vascular wall"/>
</dbReference>
<dbReference type="GO" id="GO:0009279">
    <property type="term" value="C:cell outer membrane"/>
    <property type="evidence" value="ECO:0000304"/>
    <property type="project" value="Reactome"/>
</dbReference>
<dbReference type="GO" id="GO:0015288">
    <property type="term" value="F:porin activity"/>
    <property type="evidence" value="ECO:0007669"/>
    <property type="project" value="InterPro"/>
</dbReference>
<dbReference type="FunFam" id="2.40.160.20:FF:000005">
    <property type="entry name" value="Opacity protein opA54"/>
    <property type="match status" value="1"/>
</dbReference>
<dbReference type="Gene3D" id="2.40.160.20">
    <property type="match status" value="1"/>
</dbReference>
<dbReference type="InterPro" id="IPR011250">
    <property type="entry name" value="OMP/PagP_b-brl"/>
</dbReference>
<dbReference type="InterPro" id="IPR003394">
    <property type="entry name" value="Porin_opacity"/>
</dbReference>
<dbReference type="Pfam" id="PF02462">
    <property type="entry name" value="Opacity"/>
    <property type="match status" value="1"/>
</dbReference>
<dbReference type="SUPFAM" id="SSF56925">
    <property type="entry name" value="OMPA-like"/>
    <property type="match status" value="1"/>
</dbReference>
<protein>
    <recommendedName>
        <fullName>Opacity protein opA65</fullName>
    </recommendedName>
</protein>
<comment type="function">
    <text>Implicated in a number of adherence functions. OPA proteins are implicated in pathogenesis and are subject to phase variation.</text>
</comment>
<comment type="subcellular location">
    <subcellularLocation>
        <location>Cell outer membrane</location>
    </subcellularLocation>
</comment>
<comment type="similarity">
    <text evidence="3">Belongs to the opacity porin family.</text>
</comment>
<proteinExistence type="inferred from homology"/>
<sequence length="234" mass="26242">ASKGNGRGPYVQADLAYAAERITHDYPEPTGAKKAQLSTVSDYFRNIRTHSIHPRVSVGYDFGGWRIAADYARYRKWKESNSSIKKVTEDIKDNYKETKTEHQENGTFHAVSSLGLSTIYDFQISDKIKPYIGVRVGYGHVRHQVRSVGQETITVTPKPKNGTQGGPVKSTSPIPAYHENRSSRRLGFGAMAGVGIDVAPGLTLDAGYRYHYWGRLENTRFKTHEASLGVRYRF</sequence>
<organism>
    <name type="scientific">Neisseria gonorrhoeae</name>
    <dbReference type="NCBI Taxonomy" id="485"/>
    <lineage>
        <taxon>Bacteria</taxon>
        <taxon>Pseudomonadati</taxon>
        <taxon>Pseudomonadota</taxon>
        <taxon>Betaproteobacteria</taxon>
        <taxon>Neisseriales</taxon>
        <taxon>Neisseriaceae</taxon>
        <taxon>Neisseria</taxon>
    </lineage>
</organism>